<evidence type="ECO:0000255" key="1">
    <source>
        <dbReference type="HAMAP-Rule" id="MF_03157"/>
    </source>
</evidence>
<evidence type="ECO:0000256" key="2">
    <source>
        <dbReference type="SAM" id="MobiDB-lite"/>
    </source>
</evidence>
<evidence type="ECO:0000269" key="3">
    <source>
    </source>
</evidence>
<evidence type="ECO:0000269" key="4">
    <source>
    </source>
</evidence>
<evidence type="ECO:0000269" key="5">
    <source>
    </source>
</evidence>
<evidence type="ECO:0000269" key="6">
    <source>
    </source>
</evidence>
<evidence type="ECO:0000303" key="7">
    <source ref="12"/>
</evidence>
<evidence type="ECO:0000305" key="8"/>
<evidence type="ECO:0007744" key="9">
    <source>
    </source>
</evidence>
<reference key="1">
    <citation type="journal article" date="1994" name="Yeast">
        <title>DNA sequencing of a 36.2 kb fragment located between the FAS1 and LAP loci of chromosome XI of Saccharomyces cerevisiae.</title>
        <authorList>
            <person name="Vandenbol M."/>
            <person name="Bolle P.-A."/>
            <person name="Dion C."/>
            <person name="Portetelle D."/>
            <person name="Hilger F."/>
        </authorList>
    </citation>
    <scope>NUCLEOTIDE SEQUENCE [GENOMIC DNA]</scope>
    <source>
        <strain>ATCC 204508 / S288c</strain>
    </source>
</reference>
<reference key="2">
    <citation type="journal article" date="1994" name="Nature">
        <title>Complete DNA sequence of yeast chromosome XI.</title>
        <authorList>
            <person name="Dujon B."/>
            <person name="Alexandraki D."/>
            <person name="Andre B."/>
            <person name="Ansorge W."/>
            <person name="Baladron V."/>
            <person name="Ballesta J.P.G."/>
            <person name="Banrevi A."/>
            <person name="Bolle P.-A."/>
            <person name="Bolotin-Fukuhara M."/>
            <person name="Bossier P."/>
            <person name="Bou G."/>
            <person name="Boyer J."/>
            <person name="Buitrago M.J."/>
            <person name="Cheret G."/>
            <person name="Colleaux L."/>
            <person name="Daignan-Fornier B."/>
            <person name="del Rey F."/>
            <person name="Dion C."/>
            <person name="Domdey H."/>
            <person name="Duesterhoeft A."/>
            <person name="Duesterhus S."/>
            <person name="Entian K.-D."/>
            <person name="Erfle H."/>
            <person name="Esteban P.F."/>
            <person name="Feldmann H."/>
            <person name="Fernandes L."/>
            <person name="Fobo G.M."/>
            <person name="Fritz C."/>
            <person name="Fukuhara H."/>
            <person name="Gabel C."/>
            <person name="Gaillon L."/>
            <person name="Garcia-Cantalejo J.M."/>
            <person name="Garcia-Ramirez J.J."/>
            <person name="Gent M.E."/>
            <person name="Ghazvini M."/>
            <person name="Goffeau A."/>
            <person name="Gonzalez A."/>
            <person name="Grothues D."/>
            <person name="Guerreiro P."/>
            <person name="Hegemann J.H."/>
            <person name="Hewitt N."/>
            <person name="Hilger F."/>
            <person name="Hollenberg C.P."/>
            <person name="Horaitis O."/>
            <person name="Indge K.J."/>
            <person name="Jacquier A."/>
            <person name="James C.M."/>
            <person name="Jauniaux J.-C."/>
            <person name="Jimenez A."/>
            <person name="Keuchel H."/>
            <person name="Kirchrath L."/>
            <person name="Kleine K."/>
            <person name="Koetter P."/>
            <person name="Legrain P."/>
            <person name="Liebl S."/>
            <person name="Louis E.J."/>
            <person name="Maia e Silva A."/>
            <person name="Marck C."/>
            <person name="Monnier A.-L."/>
            <person name="Moestl D."/>
            <person name="Mueller S."/>
            <person name="Obermaier B."/>
            <person name="Oliver S.G."/>
            <person name="Pallier C."/>
            <person name="Pascolo S."/>
            <person name="Pfeiffer F."/>
            <person name="Philippsen P."/>
            <person name="Planta R.J."/>
            <person name="Pohl F.M."/>
            <person name="Pohl T.M."/>
            <person name="Poehlmann R."/>
            <person name="Portetelle D."/>
            <person name="Purnelle B."/>
            <person name="Puzos V."/>
            <person name="Ramezani Rad M."/>
            <person name="Rasmussen S.W."/>
            <person name="Remacha M.A."/>
            <person name="Revuelta J.L."/>
            <person name="Richard G.-F."/>
            <person name="Rieger M."/>
            <person name="Rodrigues-Pousada C."/>
            <person name="Rose M."/>
            <person name="Rupp T."/>
            <person name="Santos M.A."/>
            <person name="Schwager C."/>
            <person name="Sensen C."/>
            <person name="Skala J."/>
            <person name="Soares H."/>
            <person name="Sor F."/>
            <person name="Stegemann J."/>
            <person name="Tettelin H."/>
            <person name="Thierry A."/>
            <person name="Tzermia M."/>
            <person name="Urrestarazu L.A."/>
            <person name="van Dyck L."/>
            <person name="van Vliet-Reedijk J.C."/>
            <person name="Valens M."/>
            <person name="Vandenbol M."/>
            <person name="Vilela C."/>
            <person name="Vissers S."/>
            <person name="von Wettstein D."/>
            <person name="Voss H."/>
            <person name="Wiemann S."/>
            <person name="Xu G."/>
            <person name="Zimmermann J."/>
            <person name="Haasemann M."/>
            <person name="Becker I."/>
            <person name="Mewes H.-W."/>
        </authorList>
    </citation>
    <scope>NUCLEOTIDE SEQUENCE [LARGE SCALE GENOMIC DNA]</scope>
    <source>
        <strain>ATCC 204508 / S288c</strain>
    </source>
</reference>
<reference key="3">
    <citation type="journal article" date="2014" name="G3 (Bethesda)">
        <title>The reference genome sequence of Saccharomyces cerevisiae: Then and now.</title>
        <authorList>
            <person name="Engel S.R."/>
            <person name="Dietrich F.S."/>
            <person name="Fisk D.G."/>
            <person name="Binkley G."/>
            <person name="Balakrishnan R."/>
            <person name="Costanzo M.C."/>
            <person name="Dwight S.S."/>
            <person name="Hitz B.C."/>
            <person name="Karra K."/>
            <person name="Nash R.S."/>
            <person name="Weng S."/>
            <person name="Wong E.D."/>
            <person name="Lloyd P."/>
            <person name="Skrzypek M.S."/>
            <person name="Miyasato S.R."/>
            <person name="Simison M."/>
            <person name="Cherry J.M."/>
        </authorList>
    </citation>
    <scope>GENOME REANNOTATION</scope>
    <source>
        <strain>ATCC 204508 / S288c</strain>
    </source>
</reference>
<reference key="4">
    <citation type="journal article" date="2007" name="Genome Res.">
        <title>Approaching a complete repository of sequence-verified protein-encoding clones for Saccharomyces cerevisiae.</title>
        <authorList>
            <person name="Hu Y."/>
            <person name="Rolfs A."/>
            <person name="Bhullar B."/>
            <person name="Murthy T.V.S."/>
            <person name="Zhu C."/>
            <person name="Berger M.F."/>
            <person name="Camargo A.A."/>
            <person name="Kelley F."/>
            <person name="McCarron S."/>
            <person name="Jepson D."/>
            <person name="Richardson A."/>
            <person name="Raphael J."/>
            <person name="Moreira D."/>
            <person name="Taycher E."/>
            <person name="Zuo D."/>
            <person name="Mohr S."/>
            <person name="Kane M.F."/>
            <person name="Williamson J."/>
            <person name="Simpson A.J.G."/>
            <person name="Bulyk M.L."/>
            <person name="Harlow E."/>
            <person name="Marsischky G."/>
            <person name="Kolodner R.D."/>
            <person name="LaBaer J."/>
        </authorList>
    </citation>
    <scope>NUCLEOTIDE SEQUENCE [GENOMIC DNA]</scope>
    <source>
        <strain>ATCC 204508 / S288c</strain>
    </source>
</reference>
<reference key="5">
    <citation type="journal article" date="1956" name="J. Biol. Chem.">
        <title>Enzymatic conversion of a reduced diphosphopyridine nucleotide derivative to reduced diphosphopyridine nucleotide.</title>
        <authorList>
            <person name="Meinhart J.O."/>
            <person name="Chaykin S."/>
            <person name="Krebs E.G."/>
        </authorList>
    </citation>
    <scope>CATALYTIC ACTIVITY</scope>
    <scope>COFACTOR</scope>
</reference>
<reference key="6">
    <citation type="journal article" date="1988" name="Biochemistry">
        <title>Equilibrium of 5,6-hydration of NADH and mechanism of ATP-dependent dehydration.</title>
        <authorList>
            <person name="Acheson S.A."/>
            <person name="Kirkman H.N."/>
            <person name="Wolfenden R."/>
        </authorList>
    </citation>
    <scope>CATALYTIC ACTIVITY</scope>
</reference>
<reference key="7">
    <citation type="journal article" date="2003" name="Nature">
        <title>Global analysis of protein localization in budding yeast.</title>
        <authorList>
            <person name="Huh W.-K."/>
            <person name="Falvo J.V."/>
            <person name="Gerke L.C."/>
            <person name="Carroll A.S."/>
            <person name="Howson R.W."/>
            <person name="Weissman J.S."/>
            <person name="O'Shea E.K."/>
        </authorList>
    </citation>
    <scope>SUBCELLULAR LOCATION [LARGE SCALE ANALYSIS]</scope>
</reference>
<reference key="8">
    <citation type="journal article" date="2003" name="Nature">
        <title>Global analysis of protein expression in yeast.</title>
        <authorList>
            <person name="Ghaemmaghami S."/>
            <person name="Huh W.-K."/>
            <person name="Bower K."/>
            <person name="Howson R.W."/>
            <person name="Belle A."/>
            <person name="Dephoure N."/>
            <person name="O'Shea E.K."/>
            <person name="Weissman J.S."/>
        </authorList>
    </citation>
    <scope>LEVEL OF PROTEIN EXPRESSION [LARGE SCALE ANALYSIS]</scope>
</reference>
<reference key="9">
    <citation type="journal article" date="2008" name="Mol. Cell. Proteomics">
        <title>A multidimensional chromatography technology for in-depth phosphoproteome analysis.</title>
        <authorList>
            <person name="Albuquerque C.P."/>
            <person name="Smolka M.B."/>
            <person name="Payne S.H."/>
            <person name="Bafna V."/>
            <person name="Eng J."/>
            <person name="Zhou H."/>
        </authorList>
    </citation>
    <scope>PHOSPHORYLATION [LARGE SCALE ANALYSIS] AT SER-6</scope>
    <scope>IDENTIFICATION BY MASS SPECTROMETRY [LARGE SCALE ANALYSIS]</scope>
</reference>
<reference key="10">
    <citation type="journal article" date="2011" name="J. Biol. Chem.">
        <title>Extremely conserved ATP- or ADP-dependent enzymatic system for nicotinamide nucleotide repair.</title>
        <authorList>
            <person name="Marbaix A.Y."/>
            <person name="Noel G."/>
            <person name="Detroux A.M."/>
            <person name="Vertommen D."/>
            <person name="Van Schaftingen E."/>
            <person name="Linster C.L."/>
        </authorList>
    </citation>
    <scope>FUNCTION</scope>
    <scope>CATALYTIC ACTIVITY</scope>
</reference>
<reference key="11">
    <citation type="journal article" date="2012" name="Proc. Natl. Acad. Sci. U.S.A.">
        <title>N-terminal acetylome analyses and functional insights of the N-terminal acetyltransferase NatB.</title>
        <authorList>
            <person name="Van Damme P."/>
            <person name="Lasa M."/>
            <person name="Polevoda B."/>
            <person name="Gazquez C."/>
            <person name="Elosegui-Artola A."/>
            <person name="Kim D.S."/>
            <person name="De Juan-Pardo E."/>
            <person name="Demeyer K."/>
            <person name="Hole K."/>
            <person name="Larrea E."/>
            <person name="Timmerman E."/>
            <person name="Prieto J."/>
            <person name="Arnesen T."/>
            <person name="Sherman F."/>
            <person name="Gevaert K."/>
            <person name="Aldabe R."/>
        </authorList>
    </citation>
    <scope>IDENTIFICATION BY MASS SPECTROMETRY [LARGE SCALE ANALYSIS]</scope>
</reference>
<reference key="12">
    <citation type="journal article" date="2016" name="Plant Gene">
        <title>YPL260W, a high-copy suppressor of a copper-sensitive phenotype in yeast, is linked to DNA repair and proteasome function.</title>
        <authorList>
            <person name="Firestone K."/>
            <person name="Awonusi D."/>
            <person name="Panfair D."/>
            <person name="Roland D."/>
            <person name="Ramamurthy A."/>
            <person name="Kusmierczyk A.R."/>
        </authorList>
    </citation>
    <scope>IDENTIFICATION</scope>
</reference>
<gene>
    <name evidence="7" type="primary">NNR2</name>
    <name type="ordered locus">YKL151C</name>
    <name type="ORF">YKL606</name>
</gene>
<protein>
    <recommendedName>
        <fullName evidence="1">ATP-dependent (S)-NAD(P)H-hydrate dehydratase</fullName>
        <ecNumber evidence="1">4.2.1.93</ecNumber>
    </recommendedName>
    <alternativeName>
        <fullName evidence="1">ATP-dependent NAD(P)HX dehydratase</fullName>
    </alternativeName>
    <alternativeName>
        <fullName evidence="7">Nicotinamide nucleotide repair protein 2</fullName>
    </alternativeName>
</protein>
<sequence length="337" mass="37357">MLAELSHRELIKLAQKRCIPPLLPKFHKGQSGGRVCIIGGCEDYTGAPYFSANATALMGCDLTHVICEYNAGTVIKSYTPNLMVHPYLRMSNTKLDVDMDEQRKKINSLLDRIHVVVIGPGLGRDPLMLKSIKDIIRYILEKHEGKIPLVIDADGLFLVTQDSEVKEMLKSYPKGRVILTPNVVEFKRLCDAIGKKGDSHSEMGSLIAQELNCIVVEKGQSDKIFSPDSEKDMLTNSEEGSNKRVGGQGDTLTGAISCMLAFSRAMYDFKICEQEEKGESSNDKPLKNWVDYAMLSCYAGCTITRECSRLGFKAKGRAMQTTDLNDRVGEVFAKLFG</sequence>
<dbReference type="EC" id="4.2.1.93" evidence="1"/>
<dbReference type="EMBL" id="Z26877">
    <property type="protein sequence ID" value="CAA81502.1"/>
    <property type="molecule type" value="Genomic_DNA"/>
</dbReference>
<dbReference type="EMBL" id="Z28151">
    <property type="protein sequence ID" value="CAA81992.1"/>
    <property type="molecule type" value="Genomic_DNA"/>
</dbReference>
<dbReference type="EMBL" id="AY557915">
    <property type="protein sequence ID" value="AAS56241.1"/>
    <property type="molecule type" value="Genomic_DNA"/>
</dbReference>
<dbReference type="EMBL" id="BK006944">
    <property type="protein sequence ID" value="DAA09012.1"/>
    <property type="molecule type" value="Genomic_DNA"/>
</dbReference>
<dbReference type="PIR" id="S37799">
    <property type="entry name" value="S37799"/>
</dbReference>
<dbReference type="RefSeq" id="NP_012771.1">
    <property type="nucleotide sequence ID" value="NM_001179717.1"/>
</dbReference>
<dbReference type="SMR" id="P36059"/>
<dbReference type="BioGRID" id="33986">
    <property type="interactions" value="58"/>
</dbReference>
<dbReference type="FunCoup" id="P36059">
    <property type="interactions" value="228"/>
</dbReference>
<dbReference type="IntAct" id="P36059">
    <property type="interactions" value="4"/>
</dbReference>
<dbReference type="MINT" id="P36059"/>
<dbReference type="STRING" id="4932.YKL151C"/>
<dbReference type="iPTMnet" id="P36059"/>
<dbReference type="PaxDb" id="4932-YKL151C"/>
<dbReference type="PeptideAtlas" id="P36059"/>
<dbReference type="EnsemblFungi" id="YKL151C_mRNA">
    <property type="protein sequence ID" value="YKL151C"/>
    <property type="gene ID" value="YKL151C"/>
</dbReference>
<dbReference type="GeneID" id="853706"/>
<dbReference type="KEGG" id="sce:YKL151C"/>
<dbReference type="AGR" id="SGD:S000001634"/>
<dbReference type="SGD" id="S000001634">
    <property type="gene designation" value="NNR2"/>
</dbReference>
<dbReference type="VEuPathDB" id="FungiDB:YKL151C"/>
<dbReference type="eggNOG" id="KOG3974">
    <property type="taxonomic scope" value="Eukaryota"/>
</dbReference>
<dbReference type="GeneTree" id="ENSGT00390000000917"/>
<dbReference type="HOGENOM" id="CLU_030651_0_0_1"/>
<dbReference type="InParanoid" id="P36059"/>
<dbReference type="OMA" id="WRAAYHN"/>
<dbReference type="OrthoDB" id="8110916at2759"/>
<dbReference type="BioCyc" id="YEAST:G3O-31923-MONOMER"/>
<dbReference type="BRENDA" id="4.2.1.93">
    <property type="organism ID" value="984"/>
</dbReference>
<dbReference type="Reactome" id="R-SCE-197264">
    <property type="pathway name" value="Nicotinamide salvaging"/>
</dbReference>
<dbReference type="BioGRID-ORCS" id="853706">
    <property type="hits" value="0 hits in 10 CRISPR screens"/>
</dbReference>
<dbReference type="PRO" id="PR:P36059"/>
<dbReference type="Proteomes" id="UP000002311">
    <property type="component" value="Chromosome XI"/>
</dbReference>
<dbReference type="RNAct" id="P36059">
    <property type="molecule type" value="protein"/>
</dbReference>
<dbReference type="GO" id="GO:0005737">
    <property type="term" value="C:cytoplasm"/>
    <property type="evidence" value="ECO:0007005"/>
    <property type="project" value="SGD"/>
</dbReference>
<dbReference type="GO" id="GO:0005524">
    <property type="term" value="F:ATP binding"/>
    <property type="evidence" value="ECO:0007669"/>
    <property type="project" value="UniProtKB-KW"/>
</dbReference>
<dbReference type="GO" id="GO:0047453">
    <property type="term" value="F:ATP-dependent NAD(P)H-hydrate dehydratase activity"/>
    <property type="evidence" value="ECO:0000314"/>
    <property type="project" value="SGD"/>
</dbReference>
<dbReference type="GO" id="GO:0110051">
    <property type="term" value="P:metabolite repair"/>
    <property type="evidence" value="ECO:0000318"/>
    <property type="project" value="GO_Central"/>
</dbReference>
<dbReference type="GO" id="GO:0046496">
    <property type="term" value="P:nicotinamide nucleotide metabolic process"/>
    <property type="evidence" value="ECO:0000314"/>
    <property type="project" value="SGD"/>
</dbReference>
<dbReference type="CDD" id="cd01171">
    <property type="entry name" value="YXKO-related"/>
    <property type="match status" value="1"/>
</dbReference>
<dbReference type="FunFam" id="3.40.1190.20:FF:000023">
    <property type="entry name" value="ATP-dependent (S)-NAD(P)H-hydrate dehydratase"/>
    <property type="match status" value="1"/>
</dbReference>
<dbReference type="Gene3D" id="3.40.1190.20">
    <property type="match status" value="1"/>
</dbReference>
<dbReference type="HAMAP" id="MF_01965">
    <property type="entry name" value="NADHX_dehydratase"/>
    <property type="match status" value="1"/>
</dbReference>
<dbReference type="InterPro" id="IPR017953">
    <property type="entry name" value="Carbohydrate_kinase_pred_CS"/>
</dbReference>
<dbReference type="InterPro" id="IPR000631">
    <property type="entry name" value="CARKD"/>
</dbReference>
<dbReference type="InterPro" id="IPR029056">
    <property type="entry name" value="Ribokinase-like"/>
</dbReference>
<dbReference type="NCBIfam" id="TIGR00196">
    <property type="entry name" value="yjeF_cterm"/>
    <property type="match status" value="1"/>
</dbReference>
<dbReference type="PANTHER" id="PTHR12592:SF0">
    <property type="entry name" value="ATP-DEPENDENT (S)-NAD(P)H-HYDRATE DEHYDRATASE"/>
    <property type="match status" value="1"/>
</dbReference>
<dbReference type="PANTHER" id="PTHR12592">
    <property type="entry name" value="ATP-DEPENDENT (S)-NAD(P)H-HYDRATE DEHYDRATASE FAMILY MEMBER"/>
    <property type="match status" value="1"/>
</dbReference>
<dbReference type="Pfam" id="PF01256">
    <property type="entry name" value="Carb_kinase"/>
    <property type="match status" value="1"/>
</dbReference>
<dbReference type="SUPFAM" id="SSF53613">
    <property type="entry name" value="Ribokinase-like"/>
    <property type="match status" value="1"/>
</dbReference>
<dbReference type="PROSITE" id="PS01049">
    <property type="entry name" value="YJEF_C_1"/>
    <property type="match status" value="1"/>
</dbReference>
<dbReference type="PROSITE" id="PS01050">
    <property type="entry name" value="YJEF_C_2"/>
    <property type="match status" value="1"/>
</dbReference>
<dbReference type="PROSITE" id="PS51383">
    <property type="entry name" value="YJEF_C_3"/>
    <property type="match status" value="1"/>
</dbReference>
<keyword id="KW-0067">ATP-binding</keyword>
<keyword id="KW-0963">Cytoplasm</keyword>
<keyword id="KW-0456">Lyase</keyword>
<keyword id="KW-0520">NAD</keyword>
<keyword id="KW-0521">NADP</keyword>
<keyword id="KW-0547">Nucleotide-binding</keyword>
<keyword id="KW-0597">Phosphoprotein</keyword>
<keyword id="KW-1185">Reference proteome</keyword>
<name>NNRD_YEAST</name>
<proteinExistence type="evidence at protein level"/>
<organism>
    <name type="scientific">Saccharomyces cerevisiae (strain ATCC 204508 / S288c)</name>
    <name type="common">Baker's yeast</name>
    <dbReference type="NCBI Taxonomy" id="559292"/>
    <lineage>
        <taxon>Eukaryota</taxon>
        <taxon>Fungi</taxon>
        <taxon>Dikarya</taxon>
        <taxon>Ascomycota</taxon>
        <taxon>Saccharomycotina</taxon>
        <taxon>Saccharomycetes</taxon>
        <taxon>Saccharomycetales</taxon>
        <taxon>Saccharomycetaceae</taxon>
        <taxon>Saccharomyces</taxon>
    </lineage>
</organism>
<comment type="function">
    <text evidence="1 6">Catalyzes the dehydration of the S-form of NAD(P)HX at the expense of ATP, which is converted to ADP. Together with NAD(P)HX epimerase, which catalyzes the epimerization of the S- and R-forms, the enzyme allows the repair of both epimers of NAD(P)HX, a damaged form of NAD(P)H that is a result of enzymatic or heat-dependent hydration.</text>
</comment>
<comment type="catalytic activity">
    <reaction evidence="1">
        <text>(6S)-NADHX + ATP = ADP + phosphate + NADH + H(+)</text>
        <dbReference type="Rhea" id="RHEA:19017"/>
        <dbReference type="ChEBI" id="CHEBI:15378"/>
        <dbReference type="ChEBI" id="CHEBI:30616"/>
        <dbReference type="ChEBI" id="CHEBI:43474"/>
        <dbReference type="ChEBI" id="CHEBI:57945"/>
        <dbReference type="ChEBI" id="CHEBI:64074"/>
        <dbReference type="ChEBI" id="CHEBI:456216"/>
        <dbReference type="EC" id="4.2.1.93"/>
    </reaction>
</comment>
<comment type="catalytic activity">
    <reaction>
        <text>(6S)-NADPHX + ATP = ADP + phosphate + NADPH + H(+)</text>
        <dbReference type="Rhea" id="RHEA:32231"/>
        <dbReference type="ChEBI" id="CHEBI:15378"/>
        <dbReference type="ChEBI" id="CHEBI:30616"/>
        <dbReference type="ChEBI" id="CHEBI:43474"/>
        <dbReference type="ChEBI" id="CHEBI:57783"/>
        <dbReference type="ChEBI" id="CHEBI:64076"/>
        <dbReference type="ChEBI" id="CHEBI:456216"/>
        <dbReference type="EC" id="4.2.1.93"/>
    </reaction>
</comment>
<comment type="cofactor">
    <cofactor evidence="1 3">
        <name>Mg(2+)</name>
        <dbReference type="ChEBI" id="CHEBI:18420"/>
    </cofactor>
</comment>
<comment type="subcellular location">
    <subcellularLocation>
        <location evidence="1 4">Cytoplasm</location>
    </subcellularLocation>
</comment>
<comment type="miscellaneous">
    <text evidence="5">Present with 3870 molecules/cell in log phase SD medium.</text>
</comment>
<comment type="similarity">
    <text evidence="1">Belongs to the NnrD/CARKD family.</text>
</comment>
<feature type="chain" id="PRO_0000119053" description="ATP-dependent (S)-NAD(P)H-hydrate dehydratase">
    <location>
        <begin position="1"/>
        <end position="337"/>
    </location>
</feature>
<feature type="domain" description="YjeF C-terminal" evidence="1">
    <location>
        <begin position="11"/>
        <end position="335"/>
    </location>
</feature>
<feature type="region of interest" description="Disordered" evidence="2">
    <location>
        <begin position="224"/>
        <end position="246"/>
    </location>
</feature>
<feature type="binding site" evidence="1">
    <location>
        <position position="121"/>
    </location>
    <ligand>
        <name>(6S)-NADPHX</name>
        <dbReference type="ChEBI" id="CHEBI:64076"/>
    </ligand>
</feature>
<feature type="binding site" evidence="1">
    <location>
        <begin position="182"/>
        <end position="188"/>
    </location>
    <ligand>
        <name>(6S)-NADPHX</name>
        <dbReference type="ChEBI" id="CHEBI:64076"/>
    </ligand>
</feature>
<feature type="binding site" evidence="1">
    <location>
        <begin position="218"/>
        <end position="222"/>
    </location>
    <ligand>
        <name>ATP</name>
        <dbReference type="ChEBI" id="CHEBI:30616"/>
    </ligand>
</feature>
<feature type="binding site" evidence="1">
    <location>
        <begin position="240"/>
        <end position="249"/>
    </location>
    <ligand>
        <name>ATP</name>
        <dbReference type="ChEBI" id="CHEBI:30616"/>
    </ligand>
</feature>
<feature type="binding site" evidence="1">
    <location>
        <position position="250"/>
    </location>
    <ligand>
        <name>(6S)-NADPHX</name>
        <dbReference type="ChEBI" id="CHEBI:64076"/>
    </ligand>
</feature>
<feature type="modified residue" description="Phosphoserine" evidence="9">
    <location>
        <position position="6"/>
    </location>
</feature>
<feature type="sequence conflict" description="In Ref. 4; AAS56241." evidence="8" ref="4">
    <original>N</original>
    <variation>D</variation>
    <location>
        <position position="182"/>
    </location>
</feature>
<accession>P36059</accession>
<accession>D6VX46</accession>
<accession>Q6Q5N3</accession>